<sequence length="336" mass="35328">MKLAVIPGDGIGVEVTAEALKVLRKLVPDLQTTEYDLGARRYNATGELLPDADLAAIREHDAILLGAIGDPSVTPGVLERGLLLNMRFALDHHVNLRPSQLYPGSKSPLAAQPDIDFVVVREGTEGPYTGNGGAIRVGTPHEIATEVSINTWFGAERVVRYAFALAQTRRKHVTLIHKTNVLSNAGAIWTRAVETVSAEYPDVETAYCHIDAATIYMVTDPSRFDVIVTDNLFGDIITDLAGAVTGGIGLAASGNIDASGTNPSMFEPVHGSAPDIAGQGIADPTAAILSAALLLRHLGRDGDAARIEAAVEADLASRGDSKVVTSEVGDRIAAAL</sequence>
<proteinExistence type="inferred from homology"/>
<name>LEU3_RHOJR</name>
<reference key="1">
    <citation type="journal article" date="2006" name="Proc. Natl. Acad. Sci. U.S.A.">
        <title>The complete genome of Rhodococcus sp. RHA1 provides insights into a catabolic powerhouse.</title>
        <authorList>
            <person name="McLeod M.P."/>
            <person name="Warren R.L."/>
            <person name="Hsiao W.W.L."/>
            <person name="Araki N."/>
            <person name="Myhre M."/>
            <person name="Fernandes C."/>
            <person name="Miyazawa D."/>
            <person name="Wong W."/>
            <person name="Lillquist A.L."/>
            <person name="Wang D."/>
            <person name="Dosanjh M."/>
            <person name="Hara H."/>
            <person name="Petrescu A."/>
            <person name="Morin R.D."/>
            <person name="Yang G."/>
            <person name="Stott J.M."/>
            <person name="Schein J.E."/>
            <person name="Shin H."/>
            <person name="Smailus D."/>
            <person name="Siddiqui A.S."/>
            <person name="Marra M.A."/>
            <person name="Jones S.J.M."/>
            <person name="Holt R."/>
            <person name="Brinkman F.S.L."/>
            <person name="Miyauchi K."/>
            <person name="Fukuda M."/>
            <person name="Davies J.E."/>
            <person name="Mohn W.W."/>
            <person name="Eltis L.D."/>
        </authorList>
    </citation>
    <scope>NUCLEOTIDE SEQUENCE [LARGE SCALE GENOMIC DNA]</scope>
    <source>
        <strain>RHA1</strain>
    </source>
</reference>
<organism>
    <name type="scientific">Rhodococcus jostii (strain RHA1)</name>
    <dbReference type="NCBI Taxonomy" id="101510"/>
    <lineage>
        <taxon>Bacteria</taxon>
        <taxon>Bacillati</taxon>
        <taxon>Actinomycetota</taxon>
        <taxon>Actinomycetes</taxon>
        <taxon>Mycobacteriales</taxon>
        <taxon>Nocardiaceae</taxon>
        <taxon>Rhodococcus</taxon>
    </lineage>
</organism>
<dbReference type="EC" id="1.1.1.85" evidence="1"/>
<dbReference type="EMBL" id="CP000431">
    <property type="protein sequence ID" value="ABG98265.1"/>
    <property type="molecule type" value="Genomic_DNA"/>
</dbReference>
<dbReference type="RefSeq" id="WP_011598375.1">
    <property type="nucleotide sequence ID" value="NC_008268.1"/>
</dbReference>
<dbReference type="SMR" id="Q0S2H1"/>
<dbReference type="KEGG" id="rha:RHA1_ro06490"/>
<dbReference type="PATRIC" id="fig|101510.16.peg.6545"/>
<dbReference type="eggNOG" id="COG0473">
    <property type="taxonomic scope" value="Bacteria"/>
</dbReference>
<dbReference type="HOGENOM" id="CLU_031953_0_1_11"/>
<dbReference type="OrthoDB" id="5289857at2"/>
<dbReference type="UniPathway" id="UPA00048">
    <property type="reaction ID" value="UER00072"/>
</dbReference>
<dbReference type="Proteomes" id="UP000008710">
    <property type="component" value="Chromosome"/>
</dbReference>
<dbReference type="GO" id="GO:0005737">
    <property type="term" value="C:cytoplasm"/>
    <property type="evidence" value="ECO:0007669"/>
    <property type="project" value="UniProtKB-SubCell"/>
</dbReference>
<dbReference type="GO" id="GO:0003862">
    <property type="term" value="F:3-isopropylmalate dehydrogenase activity"/>
    <property type="evidence" value="ECO:0007669"/>
    <property type="project" value="UniProtKB-UniRule"/>
</dbReference>
<dbReference type="GO" id="GO:0000287">
    <property type="term" value="F:magnesium ion binding"/>
    <property type="evidence" value="ECO:0007669"/>
    <property type="project" value="InterPro"/>
</dbReference>
<dbReference type="GO" id="GO:0051287">
    <property type="term" value="F:NAD binding"/>
    <property type="evidence" value="ECO:0007669"/>
    <property type="project" value="InterPro"/>
</dbReference>
<dbReference type="GO" id="GO:0009098">
    <property type="term" value="P:L-leucine biosynthetic process"/>
    <property type="evidence" value="ECO:0007669"/>
    <property type="project" value="UniProtKB-UniRule"/>
</dbReference>
<dbReference type="Gene3D" id="3.40.718.10">
    <property type="entry name" value="Isopropylmalate Dehydrogenase"/>
    <property type="match status" value="1"/>
</dbReference>
<dbReference type="HAMAP" id="MF_01035">
    <property type="entry name" value="LeuB_type2"/>
    <property type="match status" value="1"/>
</dbReference>
<dbReference type="InterPro" id="IPR050501">
    <property type="entry name" value="ICDH/IPMDH"/>
</dbReference>
<dbReference type="InterPro" id="IPR019818">
    <property type="entry name" value="IsoCit/isopropylmalate_DH_CS"/>
</dbReference>
<dbReference type="InterPro" id="IPR024084">
    <property type="entry name" value="IsoPropMal-DH-like_dom"/>
</dbReference>
<dbReference type="InterPro" id="IPR023698">
    <property type="entry name" value="LeuB_actb"/>
</dbReference>
<dbReference type="NCBIfam" id="NF002898">
    <property type="entry name" value="PRK03437.1"/>
    <property type="match status" value="1"/>
</dbReference>
<dbReference type="PANTHER" id="PTHR43275">
    <property type="entry name" value="D-MALATE DEHYDROGENASE [DECARBOXYLATING]"/>
    <property type="match status" value="1"/>
</dbReference>
<dbReference type="PANTHER" id="PTHR43275:SF1">
    <property type="entry name" value="D-MALATE DEHYDROGENASE [DECARBOXYLATING]"/>
    <property type="match status" value="1"/>
</dbReference>
<dbReference type="Pfam" id="PF00180">
    <property type="entry name" value="Iso_dh"/>
    <property type="match status" value="1"/>
</dbReference>
<dbReference type="SMART" id="SM01329">
    <property type="entry name" value="Iso_dh"/>
    <property type="match status" value="1"/>
</dbReference>
<dbReference type="SUPFAM" id="SSF53659">
    <property type="entry name" value="Isocitrate/Isopropylmalate dehydrogenase-like"/>
    <property type="match status" value="1"/>
</dbReference>
<dbReference type="PROSITE" id="PS00470">
    <property type="entry name" value="IDH_IMDH"/>
    <property type="match status" value="1"/>
</dbReference>
<gene>
    <name evidence="1" type="primary">leuB</name>
    <name type="ordered locus">RHA1_ro06490</name>
</gene>
<protein>
    <recommendedName>
        <fullName evidence="1">3-isopropylmalate dehydrogenase</fullName>
        <ecNumber evidence="1">1.1.1.85</ecNumber>
    </recommendedName>
    <alternativeName>
        <fullName evidence="1">3-IPM-DH</fullName>
    </alternativeName>
    <alternativeName>
        <fullName evidence="1">Beta-IPM dehydrogenase</fullName>
        <shortName evidence="1">IMDH</shortName>
    </alternativeName>
</protein>
<feature type="chain" id="PRO_1000063879" description="3-isopropylmalate dehydrogenase">
    <location>
        <begin position="1"/>
        <end position="336"/>
    </location>
</feature>
<feature type="binding site" evidence="1">
    <location>
        <position position="87"/>
    </location>
    <ligand>
        <name>substrate</name>
    </ligand>
</feature>
<feature type="binding site" evidence="1">
    <location>
        <position position="97"/>
    </location>
    <ligand>
        <name>substrate</name>
    </ligand>
</feature>
<feature type="binding site" evidence="1">
    <location>
        <position position="121"/>
    </location>
    <ligand>
        <name>substrate</name>
    </ligand>
</feature>
<feature type="binding site" evidence="1">
    <location>
        <position position="211"/>
    </location>
    <ligand>
        <name>Mg(2+)</name>
        <dbReference type="ChEBI" id="CHEBI:18420"/>
    </ligand>
</feature>
<feature type="binding site" evidence="1">
    <location>
        <position position="211"/>
    </location>
    <ligand>
        <name>substrate</name>
    </ligand>
</feature>
<feature type="binding site" evidence="1">
    <location>
        <position position="235"/>
    </location>
    <ligand>
        <name>Mg(2+)</name>
        <dbReference type="ChEBI" id="CHEBI:18420"/>
    </ligand>
</feature>
<feature type="binding site" evidence="1">
    <location>
        <position position="239"/>
    </location>
    <ligand>
        <name>Mg(2+)</name>
        <dbReference type="ChEBI" id="CHEBI:18420"/>
    </ligand>
</feature>
<feature type="binding site" evidence="1">
    <location>
        <begin position="271"/>
        <end position="283"/>
    </location>
    <ligand>
        <name>NAD(+)</name>
        <dbReference type="ChEBI" id="CHEBI:57540"/>
    </ligand>
</feature>
<feature type="site" description="Important for catalysis" evidence="1">
    <location>
        <position position="128"/>
    </location>
</feature>
<feature type="site" description="Important for catalysis" evidence="1">
    <location>
        <position position="178"/>
    </location>
</feature>
<accession>Q0S2H1</accession>
<comment type="function">
    <text evidence="1">Catalyzes the oxidation of 3-carboxy-2-hydroxy-4-methylpentanoate (3-isopropylmalate) to 3-carboxy-4-methyl-2-oxopentanoate. The product decarboxylates to 4-methyl-2 oxopentanoate.</text>
</comment>
<comment type="catalytic activity">
    <reaction evidence="1">
        <text>(2R,3S)-3-isopropylmalate + NAD(+) = 4-methyl-2-oxopentanoate + CO2 + NADH</text>
        <dbReference type="Rhea" id="RHEA:32271"/>
        <dbReference type="ChEBI" id="CHEBI:16526"/>
        <dbReference type="ChEBI" id="CHEBI:17865"/>
        <dbReference type="ChEBI" id="CHEBI:35121"/>
        <dbReference type="ChEBI" id="CHEBI:57540"/>
        <dbReference type="ChEBI" id="CHEBI:57945"/>
        <dbReference type="EC" id="1.1.1.85"/>
    </reaction>
</comment>
<comment type="cofactor">
    <cofactor evidence="1">
        <name>Mg(2+)</name>
        <dbReference type="ChEBI" id="CHEBI:18420"/>
    </cofactor>
    <cofactor evidence="1">
        <name>Mn(2+)</name>
        <dbReference type="ChEBI" id="CHEBI:29035"/>
    </cofactor>
    <text evidence="1">Binds 1 Mg(2+) or Mn(2+) ion per subunit.</text>
</comment>
<comment type="pathway">
    <text evidence="1">Amino-acid biosynthesis; L-leucine biosynthesis; L-leucine from 3-methyl-2-oxobutanoate: step 3/4.</text>
</comment>
<comment type="subunit">
    <text evidence="1">Homodimer.</text>
</comment>
<comment type="subcellular location">
    <subcellularLocation>
        <location evidence="1">Cytoplasm</location>
    </subcellularLocation>
</comment>
<comment type="similarity">
    <text evidence="1">Belongs to the isocitrate and isopropylmalate dehydrogenases family. LeuB type 2 subfamily.</text>
</comment>
<evidence type="ECO:0000255" key="1">
    <source>
        <dbReference type="HAMAP-Rule" id="MF_01035"/>
    </source>
</evidence>
<keyword id="KW-0028">Amino-acid biosynthesis</keyword>
<keyword id="KW-0100">Branched-chain amino acid biosynthesis</keyword>
<keyword id="KW-0963">Cytoplasm</keyword>
<keyword id="KW-0432">Leucine biosynthesis</keyword>
<keyword id="KW-0460">Magnesium</keyword>
<keyword id="KW-0464">Manganese</keyword>
<keyword id="KW-0479">Metal-binding</keyword>
<keyword id="KW-0520">NAD</keyword>
<keyword id="KW-0560">Oxidoreductase</keyword>